<proteinExistence type="inferred from homology"/>
<sequence>MSLLHIAVILPLIFALIIPILYRFFKKIHLGWFVLPIPVVLFIYFLSLISTTQSGNTVIKTLNWMPHIGMNFDLYLDGLSILFSLLITGIGSLVVLYSIGYLSKSEQLGNFYCYLLLFMGAMLGVVLSDNLIILYLFWELTSFSSFLLISFWREKKASIYGAQKSLIITVFGGLSLLGGFILISLAGDSLSLHELIANASEIQHSPLFIFAMVLIMLGAFTKSAQVPFYIWLPDAMEAPTPVSAYLHSATMVKAGLYLVARVTPLFAISQGWIWTITLVGLITLFWASLNATKQQDLKGILAFSTVSQLGMIMSMLGIGAVSYHFEGSQSQLYIAGFTAAVFHLVNHATFKGALFMITGAVDHVTGTRDVKKLGGLLTIMPISFTITVITALSMAGIPPFNGFLSKEKFLEAMIEISHANVFSLDTLGIVFPILAIVGSIFTFVYSIKFIMYIFFGKHQPNALPKKAHEASILMLLSPIILAVLVVVFGLFPGLLTQSIVEPATTAISGMSNVNAEFHLFHGITPAFISTLIIWILGILLLLTFSYWIRLLHAQPTRLTLNHWYDSTGKYLPNYSANMTNSYVNGYVRDSLVIIFGMLIVVTIVTLLSVPFDFNFKDINNIHIYEIAILILLIIAAFMVVIAKSRLFSVIMLGVVGYSVSVLFVFFKAPDLALTQFVVESISTALFLLCFYHLPNLNRYNETRSFKLTNALISIGVGLVVIILGLIAYGNRHFTSIGEYYKAHVYDLAHGKNMVNVILVDFRGMDTLFESSVLGIAGLGVYTMIKLRRKHQSSEVKSDEQAEQ</sequence>
<evidence type="ECO:0000250" key="1"/>
<evidence type="ECO:0000255" key="2"/>
<evidence type="ECO:0000305" key="3"/>
<reference key="1">
    <citation type="journal article" date="2005" name="J. Bacteriol.">
        <title>Whole-genome sequencing of Staphylococcus haemolyticus uncovers the extreme plasticity of its genome and the evolution of human-colonizing staphylococcal species.</title>
        <authorList>
            <person name="Takeuchi F."/>
            <person name="Watanabe S."/>
            <person name="Baba T."/>
            <person name="Yuzawa H."/>
            <person name="Ito T."/>
            <person name="Morimoto Y."/>
            <person name="Kuroda M."/>
            <person name="Cui L."/>
            <person name="Takahashi M."/>
            <person name="Ankai A."/>
            <person name="Baba S."/>
            <person name="Fukui S."/>
            <person name="Lee J.C."/>
            <person name="Hiramatsu K."/>
        </authorList>
    </citation>
    <scope>NUCLEOTIDE SEQUENCE [LARGE SCALE GENOMIC DNA]</scope>
    <source>
        <strain>JCSC1435</strain>
    </source>
</reference>
<keyword id="KW-0050">Antiport</keyword>
<keyword id="KW-1003">Cell membrane</keyword>
<keyword id="KW-0375">Hydrogen ion transport</keyword>
<keyword id="KW-0406">Ion transport</keyword>
<keyword id="KW-0472">Membrane</keyword>
<keyword id="KW-0915">Sodium</keyword>
<keyword id="KW-0739">Sodium transport</keyword>
<keyword id="KW-0812">Transmembrane</keyword>
<keyword id="KW-1133">Transmembrane helix</keyword>
<keyword id="KW-0813">Transport</keyword>
<dbReference type="EMBL" id="AP006716">
    <property type="protein sequence ID" value="BAE05308.1"/>
    <property type="molecule type" value="Genomic_DNA"/>
</dbReference>
<dbReference type="RefSeq" id="WP_011276266.1">
    <property type="nucleotide sequence ID" value="NC_007168.1"/>
</dbReference>
<dbReference type="SMR" id="Q4L4W7"/>
<dbReference type="KEGG" id="sha:SH1999"/>
<dbReference type="eggNOG" id="COG1009">
    <property type="taxonomic scope" value="Bacteria"/>
</dbReference>
<dbReference type="eggNOG" id="COG2111">
    <property type="taxonomic scope" value="Bacteria"/>
</dbReference>
<dbReference type="HOGENOM" id="CLU_007100_2_1_9"/>
<dbReference type="OrthoDB" id="9807568at2"/>
<dbReference type="Proteomes" id="UP000000543">
    <property type="component" value="Chromosome"/>
</dbReference>
<dbReference type="GO" id="GO:0005886">
    <property type="term" value="C:plasma membrane"/>
    <property type="evidence" value="ECO:0007669"/>
    <property type="project" value="UniProtKB-SubCell"/>
</dbReference>
<dbReference type="GO" id="GO:0015297">
    <property type="term" value="F:antiporter activity"/>
    <property type="evidence" value="ECO:0007669"/>
    <property type="project" value="UniProtKB-KW"/>
</dbReference>
<dbReference type="GO" id="GO:1902600">
    <property type="term" value="P:proton transmembrane transport"/>
    <property type="evidence" value="ECO:0007669"/>
    <property type="project" value="UniProtKB-KW"/>
</dbReference>
<dbReference type="GO" id="GO:0006814">
    <property type="term" value="P:sodium ion transport"/>
    <property type="evidence" value="ECO:0007669"/>
    <property type="project" value="UniProtKB-KW"/>
</dbReference>
<dbReference type="InterPro" id="IPR050616">
    <property type="entry name" value="CPA3_Na-H_Antiporter_A"/>
</dbReference>
<dbReference type="InterPro" id="IPR005663">
    <property type="entry name" value="MrpA/MnhA1/PhaAB"/>
</dbReference>
<dbReference type="InterPro" id="IPR025383">
    <property type="entry name" value="MrpA_C/MbhD"/>
</dbReference>
<dbReference type="InterPro" id="IPR046806">
    <property type="entry name" value="MrpA_C/MbhE"/>
</dbReference>
<dbReference type="InterPro" id="IPR001750">
    <property type="entry name" value="ND/Mrp_TM"/>
</dbReference>
<dbReference type="InterPro" id="IPR001516">
    <property type="entry name" value="Proton_antipo_N"/>
</dbReference>
<dbReference type="NCBIfam" id="TIGR00940">
    <property type="entry name" value="2a6301s01"/>
    <property type="match status" value="1"/>
</dbReference>
<dbReference type="NCBIfam" id="NF009285">
    <property type="entry name" value="PRK12645.1"/>
    <property type="match status" value="1"/>
</dbReference>
<dbReference type="PANTHER" id="PTHR43373">
    <property type="entry name" value="NA(+)/H(+) ANTIPORTER SUBUNIT"/>
    <property type="match status" value="1"/>
</dbReference>
<dbReference type="PANTHER" id="PTHR43373:SF1">
    <property type="entry name" value="NA(+)_H(+) ANTIPORTER SUBUNIT A"/>
    <property type="match status" value="1"/>
</dbReference>
<dbReference type="Pfam" id="PF13244">
    <property type="entry name" value="MbhD"/>
    <property type="match status" value="1"/>
</dbReference>
<dbReference type="Pfam" id="PF20501">
    <property type="entry name" value="MbhE"/>
    <property type="match status" value="1"/>
</dbReference>
<dbReference type="Pfam" id="PF00361">
    <property type="entry name" value="Proton_antipo_M"/>
    <property type="match status" value="1"/>
</dbReference>
<dbReference type="Pfam" id="PF00662">
    <property type="entry name" value="Proton_antipo_N"/>
    <property type="match status" value="1"/>
</dbReference>
<dbReference type="PRINTS" id="PR01434">
    <property type="entry name" value="NADHDHGNASE5"/>
</dbReference>
<dbReference type="PRINTS" id="PR01435">
    <property type="entry name" value="NPOXDRDTASE5"/>
</dbReference>
<gene>
    <name type="primary">mnhA1</name>
    <name type="ordered locus">SH1999</name>
</gene>
<organism>
    <name type="scientific">Staphylococcus haemolyticus (strain JCSC1435)</name>
    <dbReference type="NCBI Taxonomy" id="279808"/>
    <lineage>
        <taxon>Bacteria</taxon>
        <taxon>Bacillati</taxon>
        <taxon>Bacillota</taxon>
        <taxon>Bacilli</taxon>
        <taxon>Bacillales</taxon>
        <taxon>Staphylococcaceae</taxon>
        <taxon>Staphylococcus</taxon>
    </lineage>
</organism>
<name>MNHA1_STAHJ</name>
<comment type="function">
    <text evidence="1">Mnh complex is a Na(+)/H(+) antiporter involved in Na(+) excretion.</text>
</comment>
<comment type="subunit">
    <text evidence="1">May form a heterooligomeric complex that consists of seven subunits: mnhA1, mnhB1, mnhC1, mnhD1, mnhE1, mnhF1 and mnhG1.</text>
</comment>
<comment type="subcellular location">
    <subcellularLocation>
        <location evidence="3">Cell membrane</location>
        <topology evidence="3">Multi-pass membrane protein</topology>
    </subcellularLocation>
</comment>
<comment type="similarity">
    <text evidence="3">Belongs to the CPA3 antiporters (TC 2.A.63) subunit A family.</text>
</comment>
<protein>
    <recommendedName>
        <fullName>Na(+)/H(+) antiporter subunit A1</fullName>
    </recommendedName>
    <alternativeName>
        <fullName>Mnh complex subunit A1</fullName>
    </alternativeName>
</protein>
<feature type="chain" id="PRO_0000372103" description="Na(+)/H(+) antiporter subunit A1">
    <location>
        <begin position="1"/>
        <end position="803"/>
    </location>
</feature>
<feature type="transmembrane region" description="Helical" evidence="2">
    <location>
        <begin position="1"/>
        <end position="21"/>
    </location>
</feature>
<feature type="transmembrane region" description="Helical" evidence="2">
    <location>
        <begin position="30"/>
        <end position="50"/>
    </location>
</feature>
<feature type="transmembrane region" description="Helical" evidence="2">
    <location>
        <begin position="79"/>
        <end position="99"/>
    </location>
</feature>
<feature type="transmembrane region" description="Helical" evidence="2">
    <location>
        <begin position="117"/>
        <end position="137"/>
    </location>
</feature>
<feature type="transmembrane region" description="Helical" evidence="2">
    <location>
        <begin position="166"/>
        <end position="186"/>
    </location>
</feature>
<feature type="transmembrane region" description="Helical" evidence="2">
    <location>
        <begin position="208"/>
        <end position="228"/>
    </location>
</feature>
<feature type="transmembrane region" description="Helical" evidence="2">
    <location>
        <begin position="265"/>
        <end position="285"/>
    </location>
</feature>
<feature type="transmembrane region" description="Helical" evidence="2">
    <location>
        <begin position="300"/>
        <end position="320"/>
    </location>
</feature>
<feature type="transmembrane region" description="Helical" evidence="2">
    <location>
        <begin position="337"/>
        <end position="357"/>
    </location>
</feature>
<feature type="transmembrane region" description="Helical" evidence="2">
    <location>
        <begin position="377"/>
        <end position="397"/>
    </location>
</feature>
<feature type="transmembrane region" description="Helical" evidence="2">
    <location>
        <begin position="427"/>
        <end position="447"/>
    </location>
</feature>
<feature type="transmembrane region" description="Helical" evidence="2">
    <location>
        <begin position="472"/>
        <end position="492"/>
    </location>
</feature>
<feature type="transmembrane region" description="Helical" evidence="2">
    <location>
        <begin position="522"/>
        <end position="542"/>
    </location>
</feature>
<feature type="transmembrane region" description="Helical" evidence="2">
    <location>
        <begin position="591"/>
        <end position="611"/>
    </location>
</feature>
<feature type="transmembrane region" description="Helical" evidence="2">
    <location>
        <begin position="621"/>
        <end position="641"/>
    </location>
</feature>
<feature type="transmembrane region" description="Helical" evidence="2">
    <location>
        <begin position="646"/>
        <end position="666"/>
    </location>
</feature>
<feature type="transmembrane region" description="Helical" evidence="2">
    <location>
        <begin position="671"/>
        <end position="691"/>
    </location>
</feature>
<feature type="transmembrane region" description="Helical" evidence="2">
    <location>
        <begin position="707"/>
        <end position="727"/>
    </location>
</feature>
<feature type="transmembrane region" description="Helical" evidence="2">
    <location>
        <begin position="764"/>
        <end position="784"/>
    </location>
</feature>
<accession>Q4L4W7</accession>